<dbReference type="EC" id="2.1.1.148" evidence="1"/>
<dbReference type="EMBL" id="AE006641">
    <property type="protein sequence ID" value="AAK40656.1"/>
    <property type="molecule type" value="Genomic_DNA"/>
</dbReference>
<dbReference type="PIR" id="A90175">
    <property type="entry name" value="A90175"/>
</dbReference>
<dbReference type="RefSeq" id="WP_009990614.1">
    <property type="nucleotide sequence ID" value="NC_002754.1"/>
</dbReference>
<dbReference type="SMR" id="Q980H6"/>
<dbReference type="FunCoup" id="Q980H6">
    <property type="interactions" value="22"/>
</dbReference>
<dbReference type="STRING" id="273057.SSO0321"/>
<dbReference type="PaxDb" id="273057-SSO0321"/>
<dbReference type="EnsemblBacteria" id="AAK40656">
    <property type="protein sequence ID" value="AAK40656"/>
    <property type="gene ID" value="SSO0321"/>
</dbReference>
<dbReference type="GeneID" id="44129295"/>
<dbReference type="KEGG" id="sso:SSO0321"/>
<dbReference type="PATRIC" id="fig|273057.12.peg.315"/>
<dbReference type="eggNOG" id="arCOG01883">
    <property type="taxonomic scope" value="Archaea"/>
</dbReference>
<dbReference type="HOGENOM" id="CLU_077585_0_0_2"/>
<dbReference type="InParanoid" id="Q980H6"/>
<dbReference type="PhylomeDB" id="Q980H6"/>
<dbReference type="UniPathway" id="UPA00575"/>
<dbReference type="Proteomes" id="UP000001974">
    <property type="component" value="Chromosome"/>
</dbReference>
<dbReference type="GO" id="GO:0050660">
    <property type="term" value="F:flavin adenine dinucleotide binding"/>
    <property type="evidence" value="ECO:0000318"/>
    <property type="project" value="GO_Central"/>
</dbReference>
<dbReference type="GO" id="GO:0070402">
    <property type="term" value="F:NADPH binding"/>
    <property type="evidence" value="ECO:0000318"/>
    <property type="project" value="GO_Central"/>
</dbReference>
<dbReference type="GO" id="GO:0050797">
    <property type="term" value="F:thymidylate synthase (FAD) activity"/>
    <property type="evidence" value="ECO:0000318"/>
    <property type="project" value="GO_Central"/>
</dbReference>
<dbReference type="GO" id="GO:0004799">
    <property type="term" value="F:thymidylate synthase activity"/>
    <property type="evidence" value="ECO:0000318"/>
    <property type="project" value="GO_Central"/>
</dbReference>
<dbReference type="GO" id="GO:0006231">
    <property type="term" value="P:dTMP biosynthetic process"/>
    <property type="evidence" value="ECO:0000318"/>
    <property type="project" value="GO_Central"/>
</dbReference>
<dbReference type="GO" id="GO:0006235">
    <property type="term" value="P:dTTP biosynthetic process"/>
    <property type="evidence" value="ECO:0007669"/>
    <property type="project" value="UniProtKB-UniRule"/>
</dbReference>
<dbReference type="GO" id="GO:0032259">
    <property type="term" value="P:methylation"/>
    <property type="evidence" value="ECO:0007669"/>
    <property type="project" value="UniProtKB-KW"/>
</dbReference>
<dbReference type="CDD" id="cd20175">
    <property type="entry name" value="ThyX"/>
    <property type="match status" value="1"/>
</dbReference>
<dbReference type="FunFam" id="3.30.1360.170:FF:000004">
    <property type="entry name" value="Flavin-dependent thymidylate synthase"/>
    <property type="match status" value="1"/>
</dbReference>
<dbReference type="Gene3D" id="3.30.1360.170">
    <property type="match status" value="1"/>
</dbReference>
<dbReference type="HAMAP" id="MF_01408">
    <property type="entry name" value="ThyX"/>
    <property type="match status" value="1"/>
</dbReference>
<dbReference type="InterPro" id="IPR003669">
    <property type="entry name" value="Thymidylate_synthase_ThyX"/>
</dbReference>
<dbReference type="InterPro" id="IPR036098">
    <property type="entry name" value="Thymidylate_synthase_ThyX_sf"/>
</dbReference>
<dbReference type="NCBIfam" id="TIGR02170">
    <property type="entry name" value="thyX"/>
    <property type="match status" value="1"/>
</dbReference>
<dbReference type="PANTHER" id="PTHR34934">
    <property type="entry name" value="FLAVIN-DEPENDENT THYMIDYLATE SYNTHASE"/>
    <property type="match status" value="1"/>
</dbReference>
<dbReference type="PANTHER" id="PTHR34934:SF1">
    <property type="entry name" value="FLAVIN-DEPENDENT THYMIDYLATE SYNTHASE"/>
    <property type="match status" value="1"/>
</dbReference>
<dbReference type="Pfam" id="PF02511">
    <property type="entry name" value="Thy1"/>
    <property type="match status" value="1"/>
</dbReference>
<dbReference type="SUPFAM" id="SSF69796">
    <property type="entry name" value="Thymidylate synthase-complementing protein Thy1"/>
    <property type="match status" value="1"/>
</dbReference>
<dbReference type="PROSITE" id="PS51331">
    <property type="entry name" value="THYX"/>
    <property type="match status" value="1"/>
</dbReference>
<name>THYX_SACS2</name>
<accession>Q980H6</accession>
<keyword id="KW-0274">FAD</keyword>
<keyword id="KW-0285">Flavoprotein</keyword>
<keyword id="KW-0489">Methyltransferase</keyword>
<keyword id="KW-0521">NADP</keyword>
<keyword id="KW-0545">Nucleotide biosynthesis</keyword>
<keyword id="KW-1185">Reference proteome</keyword>
<keyword id="KW-0808">Transferase</keyword>
<gene>
    <name evidence="1" type="primary">thyX</name>
    <name type="ordered locus">SSO0321</name>
</gene>
<feature type="chain" id="PRO_0000175597" description="Flavin-dependent thymidylate synthase">
    <location>
        <begin position="1"/>
        <end position="260"/>
    </location>
</feature>
<feature type="domain" description="ThyX" evidence="2">
    <location>
        <begin position="2"/>
        <end position="203"/>
    </location>
</feature>
<feature type="short sequence motif" description="ThyX motif" evidence="1">
    <location>
        <begin position="80"/>
        <end position="90"/>
    </location>
</feature>
<feature type="active site" description="Involved in ionization of N3 of dUMP, leading to its activation" evidence="1">
    <location>
        <position position="169"/>
    </location>
</feature>
<feature type="binding site" evidence="1">
    <location>
        <position position="56"/>
    </location>
    <ligand>
        <name>FAD</name>
        <dbReference type="ChEBI" id="CHEBI:57692"/>
        <note>ligand shared between neighboring subunits</note>
    </ligand>
</feature>
<feature type="binding site" evidence="1">
    <location>
        <begin position="77"/>
        <end position="80"/>
    </location>
    <ligand>
        <name>dUMP</name>
        <dbReference type="ChEBI" id="CHEBI:246422"/>
        <note>ligand shared between dimeric partners</note>
    </ligand>
</feature>
<feature type="binding site" evidence="1">
    <location>
        <begin position="80"/>
        <end position="82"/>
    </location>
    <ligand>
        <name>FAD</name>
        <dbReference type="ChEBI" id="CHEBI:57692"/>
        <note>ligand shared between neighboring subunits</note>
    </ligand>
</feature>
<feature type="binding site" description="in other chain" evidence="1">
    <location>
        <begin position="88"/>
        <end position="92"/>
    </location>
    <ligand>
        <name>dUMP</name>
        <dbReference type="ChEBI" id="CHEBI:246422"/>
        <note>ligand shared between dimeric partners</note>
    </ligand>
</feature>
<feature type="binding site" evidence="1">
    <location>
        <position position="88"/>
    </location>
    <ligand>
        <name>FAD</name>
        <dbReference type="ChEBI" id="CHEBI:57692"/>
        <note>ligand shared between neighboring subunits</note>
    </ligand>
</feature>
<feature type="binding site" description="in other chain" evidence="1">
    <location>
        <position position="142"/>
    </location>
    <ligand>
        <name>dUMP</name>
        <dbReference type="ChEBI" id="CHEBI:246422"/>
        <note>ligand shared between dimeric partners</note>
    </ligand>
</feature>
<feature type="binding site" evidence="1">
    <location>
        <begin position="158"/>
        <end position="160"/>
    </location>
    <ligand>
        <name>FAD</name>
        <dbReference type="ChEBI" id="CHEBI:57692"/>
        <note>ligand shared between neighboring subunits</note>
    </ligand>
</feature>
<feature type="binding site" evidence="1">
    <location>
        <position position="164"/>
    </location>
    <ligand>
        <name>FAD</name>
        <dbReference type="ChEBI" id="CHEBI:57692"/>
        <note>ligand shared between neighboring subunits</note>
    </ligand>
</feature>
<feature type="binding site" evidence="1">
    <location>
        <position position="169"/>
    </location>
    <ligand>
        <name>dUMP</name>
        <dbReference type="ChEBI" id="CHEBI:246422"/>
        <note>ligand shared between dimeric partners</note>
    </ligand>
</feature>
<organism>
    <name type="scientific">Saccharolobus solfataricus (strain ATCC 35092 / DSM 1617 / JCM 11322 / P2)</name>
    <name type="common">Sulfolobus solfataricus</name>
    <dbReference type="NCBI Taxonomy" id="273057"/>
    <lineage>
        <taxon>Archaea</taxon>
        <taxon>Thermoproteota</taxon>
        <taxon>Thermoprotei</taxon>
        <taxon>Sulfolobales</taxon>
        <taxon>Sulfolobaceae</taxon>
        <taxon>Saccharolobus</taxon>
    </lineage>
</organism>
<reference key="1">
    <citation type="journal article" date="2001" name="Proc. Natl. Acad. Sci. U.S.A.">
        <title>The complete genome of the crenarchaeon Sulfolobus solfataricus P2.</title>
        <authorList>
            <person name="She Q."/>
            <person name="Singh R.K."/>
            <person name="Confalonieri F."/>
            <person name="Zivanovic Y."/>
            <person name="Allard G."/>
            <person name="Awayez M.J."/>
            <person name="Chan-Weiher C.C.-Y."/>
            <person name="Clausen I.G."/>
            <person name="Curtis B.A."/>
            <person name="De Moors A."/>
            <person name="Erauso G."/>
            <person name="Fletcher C."/>
            <person name="Gordon P.M.K."/>
            <person name="Heikamp-de Jong I."/>
            <person name="Jeffries A.C."/>
            <person name="Kozera C.J."/>
            <person name="Medina N."/>
            <person name="Peng X."/>
            <person name="Thi-Ngoc H.P."/>
            <person name="Redder P."/>
            <person name="Schenk M.E."/>
            <person name="Theriault C."/>
            <person name="Tolstrup N."/>
            <person name="Charlebois R.L."/>
            <person name="Doolittle W.F."/>
            <person name="Duguet M."/>
            <person name="Gaasterland T."/>
            <person name="Garrett R.A."/>
            <person name="Ragan M.A."/>
            <person name="Sensen C.W."/>
            <person name="Van der Oost J."/>
        </authorList>
    </citation>
    <scope>NUCLEOTIDE SEQUENCE [LARGE SCALE GENOMIC DNA]</scope>
    <source>
        <strain>ATCC 35092 / DSM 1617 / JCM 11322 / P2</strain>
    </source>
</reference>
<sequence length="260" mass="30568">MISVKLVSYTNDGEKVIAIAAKMSRSRKGWDYHEKDMTDDEIETWIRDAILHGYWSVLEHSVYTFSIEEISRVASHQLVRHRIASYTQMSHRFAKPIDEYYKPIIPPSAKKRSKELVEKAYKEAYDNYYTLLESGVPEEDARYVLPNGVNTNIVVTMNARELYNFFSLRLCSRAQWEIRAIAWKMLEEVKKVHPRLFKYTGPNCIIHENFIRNENESITLEDIFKDYKLEFISQRCIEGVLRDGIKKCIINSRSVLDNIK</sequence>
<protein>
    <recommendedName>
        <fullName evidence="1">Flavin-dependent thymidylate synthase</fullName>
        <shortName evidence="1">FDTS</shortName>
        <ecNumber evidence="1">2.1.1.148</ecNumber>
    </recommendedName>
    <alternativeName>
        <fullName evidence="1">FAD-dependent thymidylate synthase</fullName>
    </alternativeName>
    <alternativeName>
        <fullName evidence="1">Thymidylate synthase ThyX</fullName>
        <shortName evidence="1">TS</shortName>
        <shortName evidence="1">TSase</shortName>
    </alternativeName>
</protein>
<comment type="function">
    <text evidence="1">Catalyzes the reductive methylation of 2'-deoxyuridine-5'-monophosphate (dUMP) to 2'-deoxythymidine-5'-monophosphate (dTMP) while utilizing 5,10-methylenetetrahydrofolate (mTHF) as the methyl donor, and NADPH and FADH(2) as the reductant.</text>
</comment>
<comment type="catalytic activity">
    <reaction evidence="1">
        <text>dUMP + (6R)-5,10-methylene-5,6,7,8-tetrahydrofolate + NADPH + H(+) = dTMP + (6S)-5,6,7,8-tetrahydrofolate + NADP(+)</text>
        <dbReference type="Rhea" id="RHEA:29043"/>
        <dbReference type="ChEBI" id="CHEBI:15378"/>
        <dbReference type="ChEBI" id="CHEBI:15636"/>
        <dbReference type="ChEBI" id="CHEBI:57453"/>
        <dbReference type="ChEBI" id="CHEBI:57783"/>
        <dbReference type="ChEBI" id="CHEBI:58349"/>
        <dbReference type="ChEBI" id="CHEBI:63528"/>
        <dbReference type="ChEBI" id="CHEBI:246422"/>
        <dbReference type="EC" id="2.1.1.148"/>
    </reaction>
</comment>
<comment type="cofactor">
    <cofactor evidence="1">
        <name>FAD</name>
        <dbReference type="ChEBI" id="CHEBI:57692"/>
    </cofactor>
    <text evidence="1">Binds 4 FAD per tetramer. Each FAD binding site is formed by three monomers.</text>
</comment>
<comment type="pathway">
    <text evidence="1">Pyrimidine metabolism; dTTP biosynthesis.</text>
</comment>
<comment type="subunit">
    <text evidence="1">Homotetramer.</text>
</comment>
<comment type="similarity">
    <text evidence="1">Belongs to the thymidylate synthase ThyX family.</text>
</comment>
<proteinExistence type="inferred from homology"/>
<evidence type="ECO:0000255" key="1">
    <source>
        <dbReference type="HAMAP-Rule" id="MF_01408"/>
    </source>
</evidence>
<evidence type="ECO:0000255" key="2">
    <source>
        <dbReference type="PROSITE-ProRule" id="PRU00661"/>
    </source>
</evidence>